<accession>C0RHI7</accession>
<organism>
    <name type="scientific">Brucella melitensis biotype 2 (strain ATCC 23457)</name>
    <dbReference type="NCBI Taxonomy" id="546272"/>
    <lineage>
        <taxon>Bacteria</taxon>
        <taxon>Pseudomonadati</taxon>
        <taxon>Pseudomonadota</taxon>
        <taxon>Alphaproteobacteria</taxon>
        <taxon>Hyphomicrobiales</taxon>
        <taxon>Brucellaceae</taxon>
        <taxon>Brucella/Ochrobactrum group</taxon>
        <taxon>Brucella</taxon>
    </lineage>
</organism>
<gene>
    <name type="ordered locus">BMEA_A0516</name>
</gene>
<name>Y516_BRUMB</name>
<evidence type="ECO:0000255" key="1">
    <source>
        <dbReference type="HAMAP-Rule" id="MF_00758"/>
    </source>
</evidence>
<protein>
    <recommendedName>
        <fullName evidence="1">UPF0301 protein BMEA_A0516</fullName>
    </recommendedName>
</protein>
<reference key="1">
    <citation type="submission" date="2009-03" db="EMBL/GenBank/DDBJ databases">
        <title>Brucella melitensis ATCC 23457 whole genome shotgun sequencing project.</title>
        <authorList>
            <person name="Setubal J.C."/>
            <person name="Boyle S."/>
            <person name="Crasta O.R."/>
            <person name="Gillespie J.J."/>
            <person name="Kenyon R.W."/>
            <person name="Lu J."/>
            <person name="Mane S."/>
            <person name="Nagrani S."/>
            <person name="Shallom J.M."/>
            <person name="Shallom S."/>
            <person name="Shukla M."/>
            <person name="Snyder E.E."/>
            <person name="Sobral B.W."/>
            <person name="Wattam A.R."/>
            <person name="Will R."/>
            <person name="Williams K."/>
            <person name="Yoo H."/>
            <person name="Munk C."/>
            <person name="Tapia R."/>
            <person name="Han C."/>
            <person name="Detter J.C."/>
            <person name="Bruce D."/>
            <person name="Brettin T.S."/>
        </authorList>
    </citation>
    <scope>NUCLEOTIDE SEQUENCE [LARGE SCALE GENOMIC DNA]</scope>
    <source>
        <strain>ATCC 23457</strain>
    </source>
</reference>
<dbReference type="EMBL" id="CP001488">
    <property type="protein sequence ID" value="ACO00295.1"/>
    <property type="molecule type" value="Genomic_DNA"/>
</dbReference>
<dbReference type="RefSeq" id="WP_004683145.1">
    <property type="nucleotide sequence ID" value="NC_012441.1"/>
</dbReference>
<dbReference type="SMR" id="C0RHI7"/>
<dbReference type="KEGG" id="bmi:BMEA_A0516"/>
<dbReference type="HOGENOM" id="CLU_057596_1_0_5"/>
<dbReference type="Proteomes" id="UP000001748">
    <property type="component" value="Chromosome I"/>
</dbReference>
<dbReference type="GO" id="GO:0005829">
    <property type="term" value="C:cytosol"/>
    <property type="evidence" value="ECO:0007669"/>
    <property type="project" value="TreeGrafter"/>
</dbReference>
<dbReference type="Gene3D" id="3.40.1740.10">
    <property type="entry name" value="VC0467-like"/>
    <property type="match status" value="1"/>
</dbReference>
<dbReference type="HAMAP" id="MF_00758">
    <property type="entry name" value="UPF0301"/>
    <property type="match status" value="1"/>
</dbReference>
<dbReference type="InterPro" id="IPR003774">
    <property type="entry name" value="AlgH-like"/>
</dbReference>
<dbReference type="NCBIfam" id="NF001268">
    <property type="entry name" value="PRK00228.1-4"/>
    <property type="match status" value="1"/>
</dbReference>
<dbReference type="PANTHER" id="PTHR30327">
    <property type="entry name" value="UNCHARACTERIZED PROTEIN YQGE"/>
    <property type="match status" value="1"/>
</dbReference>
<dbReference type="PANTHER" id="PTHR30327:SF1">
    <property type="entry name" value="UPF0301 PROTEIN YQGE"/>
    <property type="match status" value="1"/>
</dbReference>
<dbReference type="Pfam" id="PF02622">
    <property type="entry name" value="DUF179"/>
    <property type="match status" value="1"/>
</dbReference>
<dbReference type="SUPFAM" id="SSF143456">
    <property type="entry name" value="VC0467-like"/>
    <property type="match status" value="1"/>
</dbReference>
<feature type="chain" id="PRO_1000148378" description="UPF0301 protein BMEA_A0516">
    <location>
        <begin position="1"/>
        <end position="200"/>
    </location>
</feature>
<sequence length="200" mass="21990">MTTHRKPSQEQGFLNGQFLLAMPGMSDERFARSVVYICAHSDEGAMGFIINQLQPVQFPDLLRQIGVIGEEDLIILPDRAQHMVVRNGGPVDRTRGFVLHSDDYMVDSTMPVSDDVCLTATVDILRAIYGGGGPERALMALGYSGWAPGQLEMEVAENGWLTCDAPLDMLFDSDIEGKYSRLMLHMGIDMSRLVSDAGHA</sequence>
<proteinExistence type="inferred from homology"/>
<comment type="similarity">
    <text evidence="1">Belongs to the UPF0301 (AlgH) family.</text>
</comment>